<comment type="catalytic activity">
    <reaction evidence="1">
        <text>tRNA(Leu) + L-leucine + ATP = L-leucyl-tRNA(Leu) + AMP + diphosphate</text>
        <dbReference type="Rhea" id="RHEA:11688"/>
        <dbReference type="Rhea" id="RHEA-COMP:9613"/>
        <dbReference type="Rhea" id="RHEA-COMP:9622"/>
        <dbReference type="ChEBI" id="CHEBI:30616"/>
        <dbReference type="ChEBI" id="CHEBI:33019"/>
        <dbReference type="ChEBI" id="CHEBI:57427"/>
        <dbReference type="ChEBI" id="CHEBI:78442"/>
        <dbReference type="ChEBI" id="CHEBI:78494"/>
        <dbReference type="ChEBI" id="CHEBI:456215"/>
        <dbReference type="EC" id="6.1.1.4"/>
    </reaction>
</comment>
<comment type="subcellular location">
    <subcellularLocation>
        <location evidence="1">Cytoplasm</location>
    </subcellularLocation>
</comment>
<comment type="similarity">
    <text evidence="1">Belongs to the class-I aminoacyl-tRNA synthetase family.</text>
</comment>
<comment type="sequence caution" evidence="2">
    <conflict type="erroneous initiation">
        <sequence resource="EMBL-CDS" id="ABJ56760"/>
    </conflict>
</comment>
<organism>
    <name type="scientific">Oenococcus oeni (strain ATCC BAA-331 / PSU-1)</name>
    <dbReference type="NCBI Taxonomy" id="203123"/>
    <lineage>
        <taxon>Bacteria</taxon>
        <taxon>Bacillati</taxon>
        <taxon>Bacillota</taxon>
        <taxon>Bacilli</taxon>
        <taxon>Lactobacillales</taxon>
        <taxon>Lactobacillaceae</taxon>
        <taxon>Oenococcus</taxon>
    </lineage>
</organism>
<gene>
    <name evidence="1" type="primary">leuS</name>
    <name type="ordered locus">OEOE_0839</name>
</gene>
<feature type="chain" id="PRO_0000334785" description="Leucine--tRNA ligase">
    <location>
        <begin position="1"/>
        <end position="810"/>
    </location>
</feature>
<feature type="short sequence motif" description="'HIGH' region">
    <location>
        <begin position="41"/>
        <end position="52"/>
    </location>
</feature>
<feature type="short sequence motif" description="'KMSKS' region">
    <location>
        <begin position="582"/>
        <end position="586"/>
    </location>
</feature>
<feature type="binding site" evidence="1">
    <location>
        <position position="585"/>
    </location>
    <ligand>
        <name>ATP</name>
        <dbReference type="ChEBI" id="CHEBI:30616"/>
    </ligand>
</feature>
<name>SYL_OENOB</name>
<dbReference type="EC" id="6.1.1.4" evidence="1"/>
<dbReference type="EMBL" id="CP000411">
    <property type="protein sequence ID" value="ABJ56760.1"/>
    <property type="status" value="ALT_INIT"/>
    <property type="molecule type" value="Genomic_DNA"/>
</dbReference>
<dbReference type="RefSeq" id="WP_002818743.1">
    <property type="nucleotide sequence ID" value="NC_008528.1"/>
</dbReference>
<dbReference type="SMR" id="Q04FL2"/>
<dbReference type="STRING" id="203123.OEOE_0839"/>
<dbReference type="GeneID" id="75066083"/>
<dbReference type="KEGG" id="ooe:OEOE_0839"/>
<dbReference type="eggNOG" id="COG0495">
    <property type="taxonomic scope" value="Bacteria"/>
</dbReference>
<dbReference type="HOGENOM" id="CLU_004427_0_0_9"/>
<dbReference type="Proteomes" id="UP000000774">
    <property type="component" value="Chromosome"/>
</dbReference>
<dbReference type="GO" id="GO:0005829">
    <property type="term" value="C:cytosol"/>
    <property type="evidence" value="ECO:0007669"/>
    <property type="project" value="TreeGrafter"/>
</dbReference>
<dbReference type="GO" id="GO:0002161">
    <property type="term" value="F:aminoacyl-tRNA deacylase activity"/>
    <property type="evidence" value="ECO:0007669"/>
    <property type="project" value="InterPro"/>
</dbReference>
<dbReference type="GO" id="GO:0005524">
    <property type="term" value="F:ATP binding"/>
    <property type="evidence" value="ECO:0007669"/>
    <property type="project" value="UniProtKB-UniRule"/>
</dbReference>
<dbReference type="GO" id="GO:0004823">
    <property type="term" value="F:leucine-tRNA ligase activity"/>
    <property type="evidence" value="ECO:0007669"/>
    <property type="project" value="UniProtKB-UniRule"/>
</dbReference>
<dbReference type="GO" id="GO:0006429">
    <property type="term" value="P:leucyl-tRNA aminoacylation"/>
    <property type="evidence" value="ECO:0007669"/>
    <property type="project" value="UniProtKB-UniRule"/>
</dbReference>
<dbReference type="CDD" id="cd07958">
    <property type="entry name" value="Anticodon_Ia_Leu_BEm"/>
    <property type="match status" value="1"/>
</dbReference>
<dbReference type="CDD" id="cd00812">
    <property type="entry name" value="LeuRS_core"/>
    <property type="match status" value="1"/>
</dbReference>
<dbReference type="FunFam" id="3.40.50.620:FF:000056">
    <property type="entry name" value="Leucine--tRNA ligase"/>
    <property type="match status" value="1"/>
</dbReference>
<dbReference type="FunFam" id="3.40.50.620:FF:000077">
    <property type="entry name" value="Leucine--tRNA ligase"/>
    <property type="match status" value="1"/>
</dbReference>
<dbReference type="FunFam" id="1.10.730.10:FF:000011">
    <property type="entry name" value="Leucine--tRNA ligase chloroplastic/mitochondrial"/>
    <property type="match status" value="1"/>
</dbReference>
<dbReference type="Gene3D" id="3.10.20.590">
    <property type="match status" value="1"/>
</dbReference>
<dbReference type="Gene3D" id="3.40.50.620">
    <property type="entry name" value="HUPs"/>
    <property type="match status" value="2"/>
</dbReference>
<dbReference type="Gene3D" id="1.10.730.10">
    <property type="entry name" value="Isoleucyl-tRNA Synthetase, Domain 1"/>
    <property type="match status" value="1"/>
</dbReference>
<dbReference type="HAMAP" id="MF_00049_B">
    <property type="entry name" value="Leu_tRNA_synth_B"/>
    <property type="match status" value="1"/>
</dbReference>
<dbReference type="InterPro" id="IPR001412">
    <property type="entry name" value="aa-tRNA-synth_I_CS"/>
</dbReference>
<dbReference type="InterPro" id="IPR002300">
    <property type="entry name" value="aa-tRNA-synth_Ia"/>
</dbReference>
<dbReference type="InterPro" id="IPR002302">
    <property type="entry name" value="Leu-tRNA-ligase"/>
</dbReference>
<dbReference type="InterPro" id="IPR025709">
    <property type="entry name" value="Leu_tRNA-synth_edit"/>
</dbReference>
<dbReference type="InterPro" id="IPR013155">
    <property type="entry name" value="M/V/L/I-tRNA-synth_anticd-bd"/>
</dbReference>
<dbReference type="InterPro" id="IPR015413">
    <property type="entry name" value="Methionyl/Leucyl_tRNA_Synth"/>
</dbReference>
<dbReference type="InterPro" id="IPR014729">
    <property type="entry name" value="Rossmann-like_a/b/a_fold"/>
</dbReference>
<dbReference type="InterPro" id="IPR009080">
    <property type="entry name" value="tRNAsynth_Ia_anticodon-bd"/>
</dbReference>
<dbReference type="InterPro" id="IPR009008">
    <property type="entry name" value="Val/Leu/Ile-tRNA-synth_edit"/>
</dbReference>
<dbReference type="NCBIfam" id="TIGR00396">
    <property type="entry name" value="leuS_bact"/>
    <property type="match status" value="1"/>
</dbReference>
<dbReference type="PANTHER" id="PTHR43740:SF2">
    <property type="entry name" value="LEUCINE--TRNA LIGASE, MITOCHONDRIAL"/>
    <property type="match status" value="1"/>
</dbReference>
<dbReference type="PANTHER" id="PTHR43740">
    <property type="entry name" value="LEUCYL-TRNA SYNTHETASE"/>
    <property type="match status" value="1"/>
</dbReference>
<dbReference type="Pfam" id="PF08264">
    <property type="entry name" value="Anticodon_1"/>
    <property type="match status" value="1"/>
</dbReference>
<dbReference type="Pfam" id="PF00133">
    <property type="entry name" value="tRNA-synt_1"/>
    <property type="match status" value="1"/>
</dbReference>
<dbReference type="Pfam" id="PF13603">
    <property type="entry name" value="tRNA-synt_1_2"/>
    <property type="match status" value="1"/>
</dbReference>
<dbReference type="Pfam" id="PF09334">
    <property type="entry name" value="tRNA-synt_1g"/>
    <property type="match status" value="1"/>
</dbReference>
<dbReference type="PRINTS" id="PR00985">
    <property type="entry name" value="TRNASYNTHLEU"/>
</dbReference>
<dbReference type="SUPFAM" id="SSF47323">
    <property type="entry name" value="Anticodon-binding domain of a subclass of class I aminoacyl-tRNA synthetases"/>
    <property type="match status" value="1"/>
</dbReference>
<dbReference type="SUPFAM" id="SSF52374">
    <property type="entry name" value="Nucleotidylyl transferase"/>
    <property type="match status" value="1"/>
</dbReference>
<dbReference type="SUPFAM" id="SSF50677">
    <property type="entry name" value="ValRS/IleRS/LeuRS editing domain"/>
    <property type="match status" value="1"/>
</dbReference>
<dbReference type="PROSITE" id="PS00178">
    <property type="entry name" value="AA_TRNA_LIGASE_I"/>
    <property type="match status" value="1"/>
</dbReference>
<proteinExistence type="inferred from homology"/>
<keyword id="KW-0030">Aminoacyl-tRNA synthetase</keyword>
<keyword id="KW-0067">ATP-binding</keyword>
<keyword id="KW-0963">Cytoplasm</keyword>
<keyword id="KW-0436">Ligase</keyword>
<keyword id="KW-0547">Nucleotide-binding</keyword>
<keyword id="KW-0648">Protein biosynthesis</keyword>
<keyword id="KW-1185">Reference proteome</keyword>
<evidence type="ECO:0000255" key="1">
    <source>
        <dbReference type="HAMAP-Rule" id="MF_00049"/>
    </source>
</evidence>
<evidence type="ECO:0000305" key="2"/>
<accession>Q04FL2</accession>
<protein>
    <recommendedName>
        <fullName evidence="1">Leucine--tRNA ligase</fullName>
        <ecNumber evidence="1">6.1.1.4</ecNumber>
    </recommendedName>
    <alternativeName>
        <fullName evidence="1">Leucyl-tRNA synthetase</fullName>
        <shortName evidence="1">LeuRS</shortName>
    </alternativeName>
</protein>
<sequence>MSYDHKAIEKRWQTYWDEHKTFKTAPETSGKPKYYVMNMFPYPSGQGLHVGHPESYTATDIMARFNRMRGFNVLQPMGWDAFGLPAEQYAIKTGHNPADFTNENIKHFKKQVKSLGFSYDWDREINTTDPEYYKWTQWIFEQLYKKGLAYEDEIMVNWAPDFPGGGIVVANEEVIDGKTERGSYPVYRVPMKQWVLRITKYAERLLSDLDDLDWPEAIKEQQRNWIGKSTGAAVFFKVDGKSDYQVEVYTTRPDTLFGASYMVLAPEHDLVDKITTSECRADVDAYKAKIASKSDLERTDLNREKTGAFTGAYGINPVNGEKIPIWIADYVLSSYGTGAIMAVPAHDTRDYEFAKKFDLPIRQVIKGGDISKEAFTGDGTHINSAFLDVLDKKQAIEKIIDWLEEHDAGHKQVNYKLRDWIFSRQRYWGEPIPVIHWEDGKQTLVPESELPLRLPHLNQDQMKPSGTGESPLANAKSWLEVTRQDGVKGRRETNTMPQWAGSSWYFLRYIDPHNDKVLADPEKLKYWMNVDLYVGGAEHAVLHLLYARFWHKFLYDLGIVPTKEPFQKLVNQGMILGTNHEKMSKSKGNVVNPDEIVDSYGADALRVYEMFMGPLTQSKPWSTESLAGIRRYLDRVWRIFTSDGDGINPIIVSENDHKLDKIFNQTVKKVTEDYAAMRFNTAISQMMVFINETFKAEKLPKKYMNAFLQLLNPVAPHITEELWQRMGHQETIAYATWPTYDESQIIEKQIEMAVQINGKVRAKINTPVDISRDELAKMATDNPDVKKQVADKNIVKIIAIPGKIINIVVK</sequence>
<reference key="1">
    <citation type="journal article" date="2006" name="Proc. Natl. Acad. Sci. U.S.A.">
        <title>Comparative genomics of the lactic acid bacteria.</title>
        <authorList>
            <person name="Makarova K.S."/>
            <person name="Slesarev A."/>
            <person name="Wolf Y.I."/>
            <person name="Sorokin A."/>
            <person name="Mirkin B."/>
            <person name="Koonin E.V."/>
            <person name="Pavlov A."/>
            <person name="Pavlova N."/>
            <person name="Karamychev V."/>
            <person name="Polouchine N."/>
            <person name="Shakhova V."/>
            <person name="Grigoriev I."/>
            <person name="Lou Y."/>
            <person name="Rohksar D."/>
            <person name="Lucas S."/>
            <person name="Huang K."/>
            <person name="Goodstein D.M."/>
            <person name="Hawkins T."/>
            <person name="Plengvidhya V."/>
            <person name="Welker D."/>
            <person name="Hughes J."/>
            <person name="Goh Y."/>
            <person name="Benson A."/>
            <person name="Baldwin K."/>
            <person name="Lee J.-H."/>
            <person name="Diaz-Muniz I."/>
            <person name="Dosti B."/>
            <person name="Smeianov V."/>
            <person name="Wechter W."/>
            <person name="Barabote R."/>
            <person name="Lorca G."/>
            <person name="Altermann E."/>
            <person name="Barrangou R."/>
            <person name="Ganesan B."/>
            <person name="Xie Y."/>
            <person name="Rawsthorne H."/>
            <person name="Tamir D."/>
            <person name="Parker C."/>
            <person name="Breidt F."/>
            <person name="Broadbent J.R."/>
            <person name="Hutkins R."/>
            <person name="O'Sullivan D."/>
            <person name="Steele J."/>
            <person name="Unlu G."/>
            <person name="Saier M.H. Jr."/>
            <person name="Klaenhammer T."/>
            <person name="Richardson P."/>
            <person name="Kozyavkin S."/>
            <person name="Weimer B.C."/>
            <person name="Mills D.A."/>
        </authorList>
    </citation>
    <scope>NUCLEOTIDE SEQUENCE [LARGE SCALE GENOMIC DNA]</scope>
    <source>
        <strain>ATCC BAA-331 / PSU-1</strain>
    </source>
</reference>